<dbReference type="EMBL" id="AE014298">
    <property type="protein sequence ID" value="AAF48866.1"/>
    <property type="molecule type" value="Genomic_DNA"/>
</dbReference>
<dbReference type="EMBL" id="AY061318">
    <property type="protein sequence ID" value="AAL28866.1"/>
    <property type="molecule type" value="mRNA"/>
</dbReference>
<dbReference type="RefSeq" id="NP_573314.1">
    <property type="nucleotide sequence ID" value="NM_133086.4"/>
</dbReference>
<dbReference type="SMR" id="Q9VWS2"/>
<dbReference type="ComplexPortal" id="CPX-2568">
    <property type="entry name" value="Nuclear pore complex"/>
</dbReference>
<dbReference type="FunCoup" id="Q9VWS2">
    <property type="interactions" value="1738"/>
</dbReference>
<dbReference type="IntAct" id="Q9VWS2">
    <property type="interactions" value="10"/>
</dbReference>
<dbReference type="MINT" id="Q9VWS2"/>
<dbReference type="STRING" id="7227.FBpp0074372"/>
<dbReference type="PaxDb" id="7227-FBpp0074372"/>
<dbReference type="DNASU" id="32851"/>
<dbReference type="EnsemblMetazoa" id="FBtr0074601">
    <property type="protein sequence ID" value="FBpp0074372"/>
    <property type="gene ID" value="FBgn0030943"/>
</dbReference>
<dbReference type="GeneID" id="32851"/>
<dbReference type="KEGG" id="dme:Dmel_CG6540"/>
<dbReference type="UCSC" id="CG6540-RA">
    <property type="organism name" value="d. melanogaster"/>
</dbReference>
<dbReference type="AGR" id="FB:FBgn0030943"/>
<dbReference type="CTD" id="129401"/>
<dbReference type="FlyBase" id="FBgn0030943">
    <property type="gene designation" value="Nup35"/>
</dbReference>
<dbReference type="VEuPathDB" id="VectorBase:FBgn0030943"/>
<dbReference type="eggNOG" id="KOG4285">
    <property type="taxonomic scope" value="Eukaryota"/>
</dbReference>
<dbReference type="GeneTree" id="ENSGT00390000005923"/>
<dbReference type="HOGENOM" id="CLU_056189_0_0_1"/>
<dbReference type="InParanoid" id="Q9VWS2"/>
<dbReference type="OMA" id="SSYHTND"/>
<dbReference type="OrthoDB" id="3365060at2759"/>
<dbReference type="PhylomeDB" id="Q9VWS2"/>
<dbReference type="Reactome" id="R-DME-159227">
    <property type="pathway name" value="Transport of the SLBP independent Mature mRNA"/>
</dbReference>
<dbReference type="Reactome" id="R-DME-159230">
    <property type="pathway name" value="Transport of the SLBP Dependant Mature mRNA"/>
</dbReference>
<dbReference type="Reactome" id="R-DME-159231">
    <property type="pathway name" value="Transport of Mature mRNA Derived from an Intronless Transcript"/>
</dbReference>
<dbReference type="Reactome" id="R-DME-159236">
    <property type="pathway name" value="Transport of Mature mRNA derived from an Intron-Containing Transcript"/>
</dbReference>
<dbReference type="Reactome" id="R-DME-3108214">
    <property type="pathway name" value="SUMOylation of DNA damage response and repair proteins"/>
</dbReference>
<dbReference type="Reactome" id="R-DME-3301854">
    <property type="pathway name" value="Nuclear Pore Complex (NPC) Disassembly"/>
</dbReference>
<dbReference type="Reactome" id="R-DME-4085377">
    <property type="pathway name" value="SUMOylation of SUMOylation proteins"/>
</dbReference>
<dbReference type="Reactome" id="R-DME-4551638">
    <property type="pathway name" value="SUMOylation of chromatin organization proteins"/>
</dbReference>
<dbReference type="Reactome" id="R-DME-4615885">
    <property type="pathway name" value="SUMOylation of DNA replication proteins"/>
</dbReference>
<dbReference type="Reactome" id="R-DME-5578749">
    <property type="pathway name" value="Transcriptional regulation by small RNAs"/>
</dbReference>
<dbReference type="Reactome" id="R-DME-9615933">
    <property type="pathway name" value="Postmitotic nuclear pore complex (NPC) reformation"/>
</dbReference>
<dbReference type="BioGRID-ORCS" id="32851">
    <property type="hits" value="0 hits in 1 CRISPR screen"/>
</dbReference>
<dbReference type="GenomeRNAi" id="32851"/>
<dbReference type="PRO" id="PR:Q9VWS2"/>
<dbReference type="Proteomes" id="UP000000803">
    <property type="component" value="Chromosome X"/>
</dbReference>
<dbReference type="Bgee" id="FBgn0030943">
    <property type="expression patterns" value="Expressed in egg cell and 64 other cell types or tissues"/>
</dbReference>
<dbReference type="GO" id="GO:0031965">
    <property type="term" value="C:nuclear membrane"/>
    <property type="evidence" value="ECO:0007669"/>
    <property type="project" value="InterPro"/>
</dbReference>
<dbReference type="GO" id="GO:0044613">
    <property type="term" value="C:nuclear pore central transport channel"/>
    <property type="evidence" value="ECO:0000250"/>
    <property type="project" value="FlyBase"/>
</dbReference>
<dbReference type="GO" id="GO:0044615">
    <property type="term" value="C:nuclear pore nuclear basket"/>
    <property type="evidence" value="ECO:0000318"/>
    <property type="project" value="GO_Central"/>
</dbReference>
<dbReference type="GO" id="GO:0003676">
    <property type="term" value="F:nucleic acid binding"/>
    <property type="evidence" value="ECO:0007669"/>
    <property type="project" value="InterPro"/>
</dbReference>
<dbReference type="GO" id="GO:0005543">
    <property type="term" value="F:phospholipid binding"/>
    <property type="evidence" value="ECO:0000318"/>
    <property type="project" value="GO_Central"/>
</dbReference>
<dbReference type="GO" id="GO:0017056">
    <property type="term" value="F:structural constituent of nuclear pore"/>
    <property type="evidence" value="ECO:0000250"/>
    <property type="project" value="FlyBase"/>
</dbReference>
<dbReference type="GO" id="GO:0051028">
    <property type="term" value="P:mRNA transport"/>
    <property type="evidence" value="ECO:0007669"/>
    <property type="project" value="UniProtKB-KW"/>
</dbReference>
<dbReference type="GO" id="GO:0006607">
    <property type="term" value="P:NLS-bearing protein import into nucleus"/>
    <property type="evidence" value="ECO:0000318"/>
    <property type="project" value="GO_Central"/>
</dbReference>
<dbReference type="GO" id="GO:0006999">
    <property type="term" value="P:nuclear pore organization"/>
    <property type="evidence" value="ECO:0000250"/>
    <property type="project" value="FlyBase"/>
</dbReference>
<dbReference type="CDD" id="cd12441">
    <property type="entry name" value="RRM_Nup53_like"/>
    <property type="match status" value="1"/>
</dbReference>
<dbReference type="FunFam" id="3.30.70.330:FF:000095">
    <property type="entry name" value="Putative Nucleoporin NUP53"/>
    <property type="match status" value="1"/>
</dbReference>
<dbReference type="Gene3D" id="3.30.70.330">
    <property type="match status" value="1"/>
</dbReference>
<dbReference type="InterPro" id="IPR017389">
    <property type="entry name" value="Nucleoporin_NUP53"/>
</dbReference>
<dbReference type="InterPro" id="IPR012677">
    <property type="entry name" value="Nucleotide-bd_a/b_plait_sf"/>
</dbReference>
<dbReference type="InterPro" id="IPR035979">
    <property type="entry name" value="RBD_domain_sf"/>
</dbReference>
<dbReference type="InterPro" id="IPR007846">
    <property type="entry name" value="RRM_NUP35_dom"/>
</dbReference>
<dbReference type="PANTHER" id="PTHR21527">
    <property type="entry name" value="NUCLEOPORIN NUP35"/>
    <property type="match status" value="1"/>
</dbReference>
<dbReference type="PANTHER" id="PTHR21527:SF6">
    <property type="entry name" value="NUCLEOPORIN NUP35"/>
    <property type="match status" value="1"/>
</dbReference>
<dbReference type="Pfam" id="PF05172">
    <property type="entry name" value="RRM_Nup35"/>
    <property type="match status" value="1"/>
</dbReference>
<dbReference type="PIRSF" id="PIRSF038119">
    <property type="entry name" value="Nucleoporin_NUP53"/>
    <property type="match status" value="1"/>
</dbReference>
<dbReference type="SUPFAM" id="SSF54928">
    <property type="entry name" value="RNA-binding domain, RBD"/>
    <property type="match status" value="1"/>
</dbReference>
<dbReference type="PROSITE" id="PS51472">
    <property type="entry name" value="RRM_NUP35"/>
    <property type="match status" value="1"/>
</dbReference>
<accession>Q9VWS2</accession>
<name>NUP35_DROME</name>
<reference evidence="10" key="1">
    <citation type="journal article" date="2000" name="Science">
        <title>The genome sequence of Drosophila melanogaster.</title>
        <authorList>
            <person name="Adams M.D."/>
            <person name="Celniker S.E."/>
            <person name="Holt R.A."/>
            <person name="Evans C.A."/>
            <person name="Gocayne J.D."/>
            <person name="Amanatides P.G."/>
            <person name="Scherer S.E."/>
            <person name="Li P.W."/>
            <person name="Hoskins R.A."/>
            <person name="Galle R.F."/>
            <person name="George R.A."/>
            <person name="Lewis S.E."/>
            <person name="Richards S."/>
            <person name="Ashburner M."/>
            <person name="Henderson S.N."/>
            <person name="Sutton G.G."/>
            <person name="Wortman J.R."/>
            <person name="Yandell M.D."/>
            <person name="Zhang Q."/>
            <person name="Chen L.X."/>
            <person name="Brandon R.C."/>
            <person name="Rogers Y.-H.C."/>
            <person name="Blazej R.G."/>
            <person name="Champe M."/>
            <person name="Pfeiffer B.D."/>
            <person name="Wan K.H."/>
            <person name="Doyle C."/>
            <person name="Baxter E.G."/>
            <person name="Helt G."/>
            <person name="Nelson C.R."/>
            <person name="Miklos G.L.G."/>
            <person name="Abril J.F."/>
            <person name="Agbayani A."/>
            <person name="An H.-J."/>
            <person name="Andrews-Pfannkoch C."/>
            <person name="Baldwin D."/>
            <person name="Ballew R.M."/>
            <person name="Basu A."/>
            <person name="Baxendale J."/>
            <person name="Bayraktaroglu L."/>
            <person name="Beasley E.M."/>
            <person name="Beeson K.Y."/>
            <person name="Benos P.V."/>
            <person name="Berman B.P."/>
            <person name="Bhandari D."/>
            <person name="Bolshakov S."/>
            <person name="Borkova D."/>
            <person name="Botchan M.R."/>
            <person name="Bouck J."/>
            <person name="Brokstein P."/>
            <person name="Brottier P."/>
            <person name="Burtis K.C."/>
            <person name="Busam D.A."/>
            <person name="Butler H."/>
            <person name="Cadieu E."/>
            <person name="Center A."/>
            <person name="Chandra I."/>
            <person name="Cherry J.M."/>
            <person name="Cawley S."/>
            <person name="Dahlke C."/>
            <person name="Davenport L.B."/>
            <person name="Davies P."/>
            <person name="de Pablos B."/>
            <person name="Delcher A."/>
            <person name="Deng Z."/>
            <person name="Mays A.D."/>
            <person name="Dew I."/>
            <person name="Dietz S.M."/>
            <person name="Dodson K."/>
            <person name="Doup L.E."/>
            <person name="Downes M."/>
            <person name="Dugan-Rocha S."/>
            <person name="Dunkov B.C."/>
            <person name="Dunn P."/>
            <person name="Durbin K.J."/>
            <person name="Evangelista C.C."/>
            <person name="Ferraz C."/>
            <person name="Ferriera S."/>
            <person name="Fleischmann W."/>
            <person name="Fosler C."/>
            <person name="Gabrielian A.E."/>
            <person name="Garg N.S."/>
            <person name="Gelbart W.M."/>
            <person name="Glasser K."/>
            <person name="Glodek A."/>
            <person name="Gong F."/>
            <person name="Gorrell J.H."/>
            <person name="Gu Z."/>
            <person name="Guan P."/>
            <person name="Harris M."/>
            <person name="Harris N.L."/>
            <person name="Harvey D.A."/>
            <person name="Heiman T.J."/>
            <person name="Hernandez J.R."/>
            <person name="Houck J."/>
            <person name="Hostin D."/>
            <person name="Houston K.A."/>
            <person name="Howland T.J."/>
            <person name="Wei M.-H."/>
            <person name="Ibegwam C."/>
            <person name="Jalali M."/>
            <person name="Kalush F."/>
            <person name="Karpen G.H."/>
            <person name="Ke Z."/>
            <person name="Kennison J.A."/>
            <person name="Ketchum K.A."/>
            <person name="Kimmel B.E."/>
            <person name="Kodira C.D."/>
            <person name="Kraft C.L."/>
            <person name="Kravitz S."/>
            <person name="Kulp D."/>
            <person name="Lai Z."/>
            <person name="Lasko P."/>
            <person name="Lei Y."/>
            <person name="Levitsky A.A."/>
            <person name="Li J.H."/>
            <person name="Li Z."/>
            <person name="Liang Y."/>
            <person name="Lin X."/>
            <person name="Liu X."/>
            <person name="Mattei B."/>
            <person name="McIntosh T.C."/>
            <person name="McLeod M.P."/>
            <person name="McPherson D."/>
            <person name="Merkulov G."/>
            <person name="Milshina N.V."/>
            <person name="Mobarry C."/>
            <person name="Morris J."/>
            <person name="Moshrefi A."/>
            <person name="Mount S.M."/>
            <person name="Moy M."/>
            <person name="Murphy B."/>
            <person name="Murphy L."/>
            <person name="Muzny D.M."/>
            <person name="Nelson D.L."/>
            <person name="Nelson D.R."/>
            <person name="Nelson K.A."/>
            <person name="Nixon K."/>
            <person name="Nusskern D.R."/>
            <person name="Pacleb J.M."/>
            <person name="Palazzolo M."/>
            <person name="Pittman G.S."/>
            <person name="Pan S."/>
            <person name="Pollard J."/>
            <person name="Puri V."/>
            <person name="Reese M.G."/>
            <person name="Reinert K."/>
            <person name="Remington K."/>
            <person name="Saunders R.D.C."/>
            <person name="Scheeler F."/>
            <person name="Shen H."/>
            <person name="Shue B.C."/>
            <person name="Siden-Kiamos I."/>
            <person name="Simpson M."/>
            <person name="Skupski M.P."/>
            <person name="Smith T.J."/>
            <person name="Spier E."/>
            <person name="Spradling A.C."/>
            <person name="Stapleton M."/>
            <person name="Strong R."/>
            <person name="Sun E."/>
            <person name="Svirskas R."/>
            <person name="Tector C."/>
            <person name="Turner R."/>
            <person name="Venter E."/>
            <person name="Wang A.H."/>
            <person name="Wang X."/>
            <person name="Wang Z.-Y."/>
            <person name="Wassarman D.A."/>
            <person name="Weinstock G.M."/>
            <person name="Weissenbach J."/>
            <person name="Williams S.M."/>
            <person name="Woodage T."/>
            <person name="Worley K.C."/>
            <person name="Wu D."/>
            <person name="Yang S."/>
            <person name="Yao Q.A."/>
            <person name="Ye J."/>
            <person name="Yeh R.-F."/>
            <person name="Zaveri J.S."/>
            <person name="Zhan M."/>
            <person name="Zhang G."/>
            <person name="Zhao Q."/>
            <person name="Zheng L."/>
            <person name="Zheng X.H."/>
            <person name="Zhong F.N."/>
            <person name="Zhong W."/>
            <person name="Zhou X."/>
            <person name="Zhu S.C."/>
            <person name="Zhu X."/>
            <person name="Smith H.O."/>
            <person name="Gibbs R.A."/>
            <person name="Myers E.W."/>
            <person name="Rubin G.M."/>
            <person name="Venter J.C."/>
        </authorList>
    </citation>
    <scope>NUCLEOTIDE SEQUENCE [LARGE SCALE GENOMIC DNA]</scope>
    <source>
        <strain>Berkeley</strain>
    </source>
</reference>
<reference evidence="10" key="2">
    <citation type="journal article" date="2002" name="Genome Biol.">
        <title>Annotation of the Drosophila melanogaster euchromatic genome: a systematic review.</title>
        <authorList>
            <person name="Misra S."/>
            <person name="Crosby M.A."/>
            <person name="Mungall C.J."/>
            <person name="Matthews B.B."/>
            <person name="Campbell K.S."/>
            <person name="Hradecky P."/>
            <person name="Huang Y."/>
            <person name="Kaminker J.S."/>
            <person name="Millburn G.H."/>
            <person name="Prochnik S.E."/>
            <person name="Smith C.D."/>
            <person name="Tupy J.L."/>
            <person name="Whitfield E.J."/>
            <person name="Bayraktaroglu L."/>
            <person name="Berman B.P."/>
            <person name="Bettencourt B.R."/>
            <person name="Celniker S.E."/>
            <person name="de Grey A.D.N.J."/>
            <person name="Drysdale R.A."/>
            <person name="Harris N.L."/>
            <person name="Richter J."/>
            <person name="Russo S."/>
            <person name="Schroeder A.J."/>
            <person name="Shu S.Q."/>
            <person name="Stapleton M."/>
            <person name="Yamada C."/>
            <person name="Ashburner M."/>
            <person name="Gelbart W.M."/>
            <person name="Rubin G.M."/>
            <person name="Lewis S.E."/>
        </authorList>
    </citation>
    <scope>GENOME REANNOTATION</scope>
    <source>
        <strain>Berkeley</strain>
    </source>
</reference>
<reference evidence="8" key="3">
    <citation type="journal article" date="2002" name="Genome Biol.">
        <title>A Drosophila full-length cDNA resource.</title>
        <authorList>
            <person name="Stapleton M."/>
            <person name="Carlson J.W."/>
            <person name="Brokstein P."/>
            <person name="Yu C."/>
            <person name="Champe M."/>
            <person name="George R.A."/>
            <person name="Guarin H."/>
            <person name="Kronmiller B."/>
            <person name="Pacleb J.M."/>
            <person name="Park S."/>
            <person name="Wan K.H."/>
            <person name="Rubin G.M."/>
            <person name="Celniker S.E."/>
        </authorList>
    </citation>
    <scope>NUCLEOTIDE SEQUENCE [LARGE SCALE MRNA]</scope>
    <source>
        <strain>Berkeley</strain>
        <tissue>Embryo</tissue>
    </source>
</reference>
<reference evidence="7" key="4">
    <citation type="journal article" date="2012" name="J. Cell Sci.">
        <title>The Nup155-mediated organisation of inner nuclear membrane proteins is independent of Nup155 anchoring to the metazoan nuclear pore complex.</title>
        <authorList>
            <person name="Busayavalasa K."/>
            <person name="Chen X."/>
            <person name="Farrants A.K."/>
            <person name="Wagner N."/>
            <person name="Sabri N."/>
        </authorList>
    </citation>
    <scope>FUNCTION</scope>
    <scope>INTERACTION WITH NUP154</scope>
</reference>
<keyword id="KW-0509">mRNA transport</keyword>
<keyword id="KW-0906">Nuclear pore complex</keyword>
<keyword id="KW-0539">Nucleus</keyword>
<keyword id="KW-0653">Protein transport</keyword>
<keyword id="KW-1185">Reference proteome</keyword>
<keyword id="KW-0811">Translocation</keyword>
<keyword id="KW-0813">Transport</keyword>
<feature type="chain" id="PRO_0000443735" description="Nucleoporin Nup35">
    <location>
        <begin position="1"/>
        <end position="331"/>
    </location>
</feature>
<feature type="domain" description="RRM Nup35-type" evidence="3">
    <location>
        <begin position="187"/>
        <end position="268"/>
    </location>
</feature>
<feature type="region of interest" description="Disordered" evidence="4">
    <location>
        <begin position="1"/>
        <end position="63"/>
    </location>
</feature>
<feature type="region of interest" description="Disordered" evidence="4">
    <location>
        <begin position="79"/>
        <end position="110"/>
    </location>
</feature>
<feature type="compositionally biased region" description="Polar residues" evidence="4">
    <location>
        <begin position="8"/>
        <end position="20"/>
    </location>
</feature>
<feature type="compositionally biased region" description="Polar residues" evidence="4">
    <location>
        <begin position="35"/>
        <end position="56"/>
    </location>
</feature>
<feature type="compositionally biased region" description="Polar residues" evidence="4">
    <location>
        <begin position="84"/>
        <end position="104"/>
    </location>
</feature>
<organism evidence="10">
    <name type="scientific">Drosophila melanogaster</name>
    <name type="common">Fruit fly</name>
    <dbReference type="NCBI Taxonomy" id="7227"/>
    <lineage>
        <taxon>Eukaryota</taxon>
        <taxon>Metazoa</taxon>
        <taxon>Ecdysozoa</taxon>
        <taxon>Arthropoda</taxon>
        <taxon>Hexapoda</taxon>
        <taxon>Insecta</taxon>
        <taxon>Pterygota</taxon>
        <taxon>Neoptera</taxon>
        <taxon>Endopterygota</taxon>
        <taxon>Diptera</taxon>
        <taxon>Brachycera</taxon>
        <taxon>Muscomorpha</taxon>
        <taxon>Ephydroidea</taxon>
        <taxon>Drosophilidae</taxon>
        <taxon>Drosophila</taxon>
        <taxon>Sophophora</taxon>
    </lineage>
</organism>
<comment type="function">
    <text evidence="1 5">Functions as a component of the nuclear pore complex (NPC) (By similarity). May have a role in the organization of the inner nuclear membrane proteins at the nuclear envelope together with Nup154 (PubMed:22718353).</text>
</comment>
<comment type="subunit">
    <text evidence="5">Interacts with Nup154.</text>
</comment>
<comment type="interaction">
    <interactant intactId="EBI-3430080">
        <id>Q9VWS2</id>
    </interactant>
    <interactant intactId="EBI-118619">
        <id>Q9V463</id>
        <label>Nup154</label>
    </interactant>
    <organismsDiffer>false</organismsDiffer>
    <experiments>2</experiments>
</comment>
<comment type="subcellular location">
    <subcellularLocation>
        <location evidence="2">Nucleus</location>
        <location evidence="2">Nuclear pore complex</location>
    </subcellularLocation>
</comment>
<comment type="similarity">
    <text evidence="7">Belongs to the Nup35 family.</text>
</comment>
<gene>
    <name evidence="9" type="primary">Nup35</name>
    <name evidence="6" type="synonym">Nup53</name>
    <name evidence="9" type="ORF">CG6540</name>
</gene>
<sequence length="331" mass="35099">MEPMNLGSPVNSPGSNQTQYLPPFLLGDPQGITPHKNTLSPKTGRSNISFATSPGGSSPHELNRSALSTRTLFAAQGGAHTAVGANSSTTAHGQTHSHHQTGPPTQGLFDSLREQSVTPKKKNHLGMLQLQSPNQSYQSSYHTNDSFAPGAPNAINASMRALCSPLGATASPAGGLGTSVTTGGNSRLSDFWVTIFGFPPGAGSMVLQHFTVCGTIVDVVHAPQNGNWMYVRYSSRIESDKALNYNEKIIAGNVMVGVSRCTDRSVIDKENIGSVPNAEIGDPPTSPSAIRPFSQQSYKLARKDNIISPQKDVPQKSSGLMDKAMDLIFGW</sequence>
<proteinExistence type="evidence at protein level"/>
<evidence type="ECO:0000250" key="1">
    <source>
        <dbReference type="UniProtKB" id="Q8NFH5"/>
    </source>
</evidence>
<evidence type="ECO:0000255" key="2">
    <source>
        <dbReference type="PIRNR" id="PIRNR038119"/>
    </source>
</evidence>
<evidence type="ECO:0000255" key="3">
    <source>
        <dbReference type="PROSITE-ProRule" id="PRU00804"/>
    </source>
</evidence>
<evidence type="ECO:0000256" key="4">
    <source>
        <dbReference type="SAM" id="MobiDB-lite"/>
    </source>
</evidence>
<evidence type="ECO:0000269" key="5">
    <source>
    </source>
</evidence>
<evidence type="ECO:0000303" key="6">
    <source>
    </source>
</evidence>
<evidence type="ECO:0000305" key="7"/>
<evidence type="ECO:0000312" key="8">
    <source>
        <dbReference type="EMBL" id="AAL28866.1"/>
    </source>
</evidence>
<evidence type="ECO:0000312" key="9">
    <source>
        <dbReference type="FlyBase" id="FBgn0030943"/>
    </source>
</evidence>
<evidence type="ECO:0000312" key="10">
    <source>
        <dbReference type="Proteomes" id="UP000000803"/>
    </source>
</evidence>
<protein>
    <recommendedName>
        <fullName evidence="7">Nucleoporin Nup35</fullName>
    </recommendedName>
    <alternativeName>
        <fullName evidence="7">35 kDa nucleoporin</fullName>
    </alternativeName>
    <alternativeName>
        <fullName evidence="9">Nuclear pore complex protein Nup35</fullName>
    </alternativeName>
    <alternativeName>
        <fullName evidence="6">Nucleoporin Nup53</fullName>
    </alternativeName>
</protein>